<comment type="function">
    <text evidence="1">Specifically methylates the N7 position of guanine in position 527 of 16S rRNA.</text>
</comment>
<comment type="catalytic activity">
    <reaction evidence="1">
        <text>guanosine(527) in 16S rRNA + S-adenosyl-L-methionine = N(7)-methylguanosine(527) in 16S rRNA + S-adenosyl-L-homocysteine</text>
        <dbReference type="Rhea" id="RHEA:42732"/>
        <dbReference type="Rhea" id="RHEA-COMP:10209"/>
        <dbReference type="Rhea" id="RHEA-COMP:10210"/>
        <dbReference type="ChEBI" id="CHEBI:57856"/>
        <dbReference type="ChEBI" id="CHEBI:59789"/>
        <dbReference type="ChEBI" id="CHEBI:74269"/>
        <dbReference type="ChEBI" id="CHEBI:74480"/>
        <dbReference type="EC" id="2.1.1.170"/>
    </reaction>
</comment>
<comment type="subcellular location">
    <subcellularLocation>
        <location evidence="1">Cytoplasm</location>
    </subcellularLocation>
</comment>
<comment type="similarity">
    <text evidence="1">Belongs to the methyltransferase superfamily. RNA methyltransferase RsmG family.</text>
</comment>
<keyword id="KW-0963">Cytoplasm</keyword>
<keyword id="KW-0489">Methyltransferase</keyword>
<keyword id="KW-1185">Reference proteome</keyword>
<keyword id="KW-0698">rRNA processing</keyword>
<keyword id="KW-0949">S-adenosyl-L-methionine</keyword>
<keyword id="KW-0808">Transferase</keyword>
<accession>Q5P4J7</accession>
<feature type="chain" id="PRO_0000184208" description="Ribosomal RNA small subunit methyltransferase G">
    <location>
        <begin position="1"/>
        <end position="211"/>
    </location>
</feature>
<feature type="binding site" evidence="1">
    <location>
        <position position="75"/>
    </location>
    <ligand>
        <name>S-adenosyl-L-methionine</name>
        <dbReference type="ChEBI" id="CHEBI:59789"/>
    </ligand>
</feature>
<feature type="binding site" evidence="1">
    <location>
        <position position="80"/>
    </location>
    <ligand>
        <name>S-adenosyl-L-methionine</name>
        <dbReference type="ChEBI" id="CHEBI:59789"/>
    </ligand>
</feature>
<feature type="binding site" evidence="1">
    <location>
        <begin position="130"/>
        <end position="131"/>
    </location>
    <ligand>
        <name>S-adenosyl-L-methionine</name>
        <dbReference type="ChEBI" id="CHEBI:59789"/>
    </ligand>
</feature>
<feature type="binding site" evidence="1">
    <location>
        <position position="145"/>
    </location>
    <ligand>
        <name>S-adenosyl-L-methionine</name>
        <dbReference type="ChEBI" id="CHEBI:59789"/>
    </ligand>
</feature>
<sequence>MSAATLEQGLAELGLHLSPATQARLAAFATLLQKWNRVYNLTSIRDAGQVVTHHLLDSLAVLPHLEGITTLADVGSGGGLPGIPLALAAPDCHPALAVTSIETVNKKASFQQQAKIELGLANFTVVNERVENVRPEAKFDAVISRAFSELLDFVGLTAHLLRPGGRFLAMKGVYPRDEIARLPAGFRVVEVHPLTVPGLGAERHLIILERN</sequence>
<evidence type="ECO:0000255" key="1">
    <source>
        <dbReference type="HAMAP-Rule" id="MF_00074"/>
    </source>
</evidence>
<gene>
    <name evidence="1" type="primary">rsmG</name>
    <name type="ordered locus">AZOSEA16410</name>
    <name type="ORF">ebA2913</name>
</gene>
<name>RSMG_AROAE</name>
<organism>
    <name type="scientific">Aromatoleum aromaticum (strain DSM 19018 / LMG 30748 / EbN1)</name>
    <name type="common">Azoarcus sp. (strain EbN1)</name>
    <dbReference type="NCBI Taxonomy" id="76114"/>
    <lineage>
        <taxon>Bacteria</taxon>
        <taxon>Pseudomonadati</taxon>
        <taxon>Pseudomonadota</taxon>
        <taxon>Betaproteobacteria</taxon>
        <taxon>Rhodocyclales</taxon>
        <taxon>Rhodocyclaceae</taxon>
        <taxon>Aromatoleum</taxon>
    </lineage>
</organism>
<reference key="1">
    <citation type="journal article" date="2005" name="Arch. Microbiol.">
        <title>The genome sequence of an anaerobic aromatic-degrading denitrifying bacterium, strain EbN1.</title>
        <authorList>
            <person name="Rabus R."/>
            <person name="Kube M."/>
            <person name="Heider J."/>
            <person name="Beck A."/>
            <person name="Heitmann K."/>
            <person name="Widdel F."/>
            <person name="Reinhardt R."/>
        </authorList>
    </citation>
    <scope>NUCLEOTIDE SEQUENCE [LARGE SCALE GENOMIC DNA]</scope>
    <source>
        <strain>DSM 19018 / LMG 30748 / EbN1</strain>
    </source>
</reference>
<proteinExistence type="inferred from homology"/>
<protein>
    <recommendedName>
        <fullName evidence="1">Ribosomal RNA small subunit methyltransferase G</fullName>
        <ecNumber evidence="1">2.1.1.170</ecNumber>
    </recommendedName>
    <alternativeName>
        <fullName evidence="1">16S rRNA 7-methylguanosine methyltransferase</fullName>
        <shortName evidence="1">16S rRNA m7G methyltransferase</shortName>
    </alternativeName>
</protein>
<dbReference type="EC" id="2.1.1.170" evidence="1"/>
<dbReference type="EMBL" id="CR555306">
    <property type="protein sequence ID" value="CAI07766.1"/>
    <property type="molecule type" value="Genomic_DNA"/>
</dbReference>
<dbReference type="RefSeq" id="WP_011237480.1">
    <property type="nucleotide sequence ID" value="NC_006513.1"/>
</dbReference>
<dbReference type="SMR" id="Q5P4J7"/>
<dbReference type="STRING" id="76114.ebA2913"/>
<dbReference type="KEGG" id="eba:ebA2913"/>
<dbReference type="eggNOG" id="COG0357">
    <property type="taxonomic scope" value="Bacteria"/>
</dbReference>
<dbReference type="HOGENOM" id="CLU_065341_2_0_4"/>
<dbReference type="OrthoDB" id="9808773at2"/>
<dbReference type="Proteomes" id="UP000006552">
    <property type="component" value="Chromosome"/>
</dbReference>
<dbReference type="GO" id="GO:0005829">
    <property type="term" value="C:cytosol"/>
    <property type="evidence" value="ECO:0007669"/>
    <property type="project" value="TreeGrafter"/>
</dbReference>
<dbReference type="GO" id="GO:0070043">
    <property type="term" value="F:rRNA (guanine-N7-)-methyltransferase activity"/>
    <property type="evidence" value="ECO:0007669"/>
    <property type="project" value="UniProtKB-UniRule"/>
</dbReference>
<dbReference type="CDD" id="cd02440">
    <property type="entry name" value="AdoMet_MTases"/>
    <property type="match status" value="1"/>
</dbReference>
<dbReference type="Gene3D" id="3.40.50.150">
    <property type="entry name" value="Vaccinia Virus protein VP39"/>
    <property type="match status" value="1"/>
</dbReference>
<dbReference type="HAMAP" id="MF_00074">
    <property type="entry name" value="16SrRNA_methyltr_G"/>
    <property type="match status" value="1"/>
</dbReference>
<dbReference type="InterPro" id="IPR003682">
    <property type="entry name" value="rRNA_ssu_MeTfrase_G"/>
</dbReference>
<dbReference type="InterPro" id="IPR029063">
    <property type="entry name" value="SAM-dependent_MTases_sf"/>
</dbReference>
<dbReference type="NCBIfam" id="TIGR00138">
    <property type="entry name" value="rsmG_gidB"/>
    <property type="match status" value="1"/>
</dbReference>
<dbReference type="PANTHER" id="PTHR31760">
    <property type="entry name" value="S-ADENOSYL-L-METHIONINE-DEPENDENT METHYLTRANSFERASES SUPERFAMILY PROTEIN"/>
    <property type="match status" value="1"/>
</dbReference>
<dbReference type="PANTHER" id="PTHR31760:SF0">
    <property type="entry name" value="S-ADENOSYL-L-METHIONINE-DEPENDENT METHYLTRANSFERASES SUPERFAMILY PROTEIN"/>
    <property type="match status" value="1"/>
</dbReference>
<dbReference type="Pfam" id="PF02527">
    <property type="entry name" value="GidB"/>
    <property type="match status" value="1"/>
</dbReference>
<dbReference type="PIRSF" id="PIRSF003078">
    <property type="entry name" value="GidB"/>
    <property type="match status" value="1"/>
</dbReference>
<dbReference type="SUPFAM" id="SSF53335">
    <property type="entry name" value="S-adenosyl-L-methionine-dependent methyltransferases"/>
    <property type="match status" value="1"/>
</dbReference>